<reference key="1">
    <citation type="journal article" date="2001" name="Genome Res.">
        <title>The complete genome sequence of the lactic acid bacterium Lactococcus lactis ssp. lactis IL1403.</title>
        <authorList>
            <person name="Bolotin A."/>
            <person name="Wincker P."/>
            <person name="Mauger S."/>
            <person name="Jaillon O."/>
            <person name="Malarme K."/>
            <person name="Weissenbach J."/>
            <person name="Ehrlich S.D."/>
            <person name="Sorokin A."/>
        </authorList>
    </citation>
    <scope>NUCLEOTIDE SEQUENCE [LARGE SCALE GENOMIC DNA]</scope>
    <source>
        <strain>IL1403</strain>
    </source>
</reference>
<organism>
    <name type="scientific">Lactococcus lactis subsp. lactis (strain IL1403)</name>
    <name type="common">Streptococcus lactis</name>
    <dbReference type="NCBI Taxonomy" id="272623"/>
    <lineage>
        <taxon>Bacteria</taxon>
        <taxon>Bacillati</taxon>
        <taxon>Bacillota</taxon>
        <taxon>Bacilli</taxon>
        <taxon>Lactobacillales</taxon>
        <taxon>Streptococcaceae</taxon>
        <taxon>Lactococcus</taxon>
    </lineage>
</organism>
<keyword id="KW-0929">Antimicrobial</keyword>
<keyword id="KW-0081">Bacteriolytic enzyme</keyword>
<keyword id="KW-0131">Cell cycle</keyword>
<keyword id="KW-0132">Cell division</keyword>
<keyword id="KW-0961">Cell wall biogenesis/degradation</keyword>
<keyword id="KW-0326">Glycosidase</keyword>
<keyword id="KW-0378">Hydrolase</keyword>
<keyword id="KW-1185">Reference proteome</keyword>
<keyword id="KW-0677">Repeat</keyword>
<keyword id="KW-0964">Secreted</keyword>
<keyword id="KW-0717">Septation</keyword>
<keyword id="KW-0732">Signal</keyword>
<protein>
    <recommendedName>
        <fullName>Probable N-acetylmuramidase</fullName>
        <ecNumber>3.2.1.17</ecNumber>
    </recommendedName>
    <alternativeName>
        <fullName>Autolysin</fullName>
    </alternativeName>
    <alternativeName>
        <fullName>Lysozyme</fullName>
    </alternativeName>
    <alternativeName>
        <fullName>Peptidoglycan hydrolase</fullName>
    </alternativeName>
</protein>
<comment type="function">
    <text evidence="1">Required for cell separation during growth.</text>
</comment>
<comment type="catalytic activity">
    <reaction>
        <text>Hydrolysis of (1-&gt;4)-beta-linkages between N-acetylmuramic acid and N-acetyl-D-glucosamine residues in a peptidoglycan and between N-acetyl-D-glucosamine residues in chitodextrins.</text>
        <dbReference type="EC" id="3.2.1.17"/>
    </reaction>
</comment>
<comment type="subcellular location">
    <subcellularLocation>
        <location evidence="1">Secreted</location>
    </subcellularLocation>
</comment>
<comment type="domain">
    <text>The LysM domains are thought to be involved in peptidoglycan binding.</text>
</comment>
<comment type="similarity">
    <text evidence="5">Belongs to the glycosyl hydrolase 73 family.</text>
</comment>
<proteinExistence type="inferred from homology"/>
<sequence length="439" mass="46592">MPVSRIKVKNRHLKKKAKKPLAFYKPATKFAGAVLIAGTLTTTHELLLQQTSPMVQAATNSTEAFIESIAASAKPVADSNGLYPSVMIAQAILESNWGSSQLSRAPYYNLFGIQGTYQGKSVVFKTQEYLNGKWVTKDMPFRVYPSFNQSFQDNAYVLKTTNFGNGPYYAKAWRANAATYQAATAALTGKYATDPNYGASLNRIISQYNLTRFDGASSAGTSNSGGSTATNTNNNSNTSSTTYTVKSGDTLWGISQKYGISVAQIQSANNLKSTVIYIGQKLVLTTSSSSSNTNSSTSSGNSAGTTTPTTSVTPAKPASQTTIKVKSGDTLWGLSVKYKTTIAQLKSWNHLNSDTIFIGQNLIVSQSAGSSSSSTGSSSASTSSTSNSSAASNTSIHKVVKGDTLWGLSQKSGSPIASIKAWNHLSSDTILIGQYLRIK</sequence>
<feature type="signal peptide" evidence="2">
    <location>
        <begin position="1"/>
        <end position="57"/>
    </location>
</feature>
<feature type="chain" id="PRO_0000012112" description="Probable N-acetylmuramidase">
    <location>
        <begin position="58"/>
        <end position="439"/>
    </location>
</feature>
<feature type="domain" description="LysM 1" evidence="3">
    <location>
        <begin position="241"/>
        <end position="284"/>
    </location>
</feature>
<feature type="domain" description="LysM 2" evidence="3">
    <location>
        <begin position="321"/>
        <end position="364"/>
    </location>
</feature>
<feature type="domain" description="LysM 3" evidence="3">
    <location>
        <begin position="395"/>
        <end position="438"/>
    </location>
</feature>
<feature type="region of interest" description="Disordered" evidence="4">
    <location>
        <begin position="218"/>
        <end position="241"/>
    </location>
</feature>
<feature type="region of interest" description="Disordered" evidence="4">
    <location>
        <begin position="287"/>
        <end position="320"/>
    </location>
</feature>
<feature type="region of interest" description="Disordered" evidence="4">
    <location>
        <begin position="372"/>
        <end position="393"/>
    </location>
</feature>
<feature type="compositionally biased region" description="Low complexity" evidence="4">
    <location>
        <begin position="287"/>
        <end position="319"/>
    </location>
</feature>
<accession>Q9CIT4</accession>
<gene>
    <name type="primary">acmA</name>
    <name type="ordered locus">LL0272</name>
    <name type="ORF">L68758</name>
</gene>
<evidence type="ECO:0000250" key="1"/>
<evidence type="ECO:0000255" key="2"/>
<evidence type="ECO:0000255" key="3">
    <source>
        <dbReference type="PROSITE-ProRule" id="PRU01118"/>
    </source>
</evidence>
<evidence type="ECO:0000256" key="4">
    <source>
        <dbReference type="SAM" id="MobiDB-lite"/>
    </source>
</evidence>
<evidence type="ECO:0000305" key="5"/>
<dbReference type="EC" id="3.2.1.17"/>
<dbReference type="EMBL" id="AE005176">
    <property type="protein sequence ID" value="AAK04370.1"/>
    <property type="molecule type" value="Genomic_DNA"/>
</dbReference>
<dbReference type="PIR" id="H86658">
    <property type="entry name" value="H86658"/>
</dbReference>
<dbReference type="RefSeq" id="NP_266428.1">
    <property type="nucleotide sequence ID" value="NC_002662.1"/>
</dbReference>
<dbReference type="RefSeq" id="WP_010905256.1">
    <property type="nucleotide sequence ID" value="NC_002662.1"/>
</dbReference>
<dbReference type="SMR" id="Q9CIT4"/>
<dbReference type="CAZy" id="CBM50">
    <property type="family name" value="Carbohydrate-Binding Module Family 50"/>
</dbReference>
<dbReference type="CAZy" id="GH73">
    <property type="family name" value="Glycoside Hydrolase Family 73"/>
</dbReference>
<dbReference type="PaxDb" id="272623-L68758"/>
<dbReference type="EnsemblBacteria" id="AAK04370">
    <property type="protein sequence ID" value="AAK04370"/>
    <property type="gene ID" value="L68758"/>
</dbReference>
<dbReference type="KEGG" id="lla:L68758"/>
<dbReference type="PATRIC" id="fig|272623.7.peg.298"/>
<dbReference type="eggNOG" id="COG1388">
    <property type="taxonomic scope" value="Bacteria"/>
</dbReference>
<dbReference type="eggNOG" id="COG1705">
    <property type="taxonomic scope" value="Bacteria"/>
</dbReference>
<dbReference type="HOGENOM" id="CLU_013771_6_1_9"/>
<dbReference type="OrthoDB" id="2155627at2"/>
<dbReference type="Proteomes" id="UP000002196">
    <property type="component" value="Chromosome"/>
</dbReference>
<dbReference type="GO" id="GO:0005576">
    <property type="term" value="C:extracellular region"/>
    <property type="evidence" value="ECO:0007669"/>
    <property type="project" value="UniProtKB-SubCell"/>
</dbReference>
<dbReference type="GO" id="GO:0004040">
    <property type="term" value="F:amidase activity"/>
    <property type="evidence" value="ECO:0007669"/>
    <property type="project" value="InterPro"/>
</dbReference>
<dbReference type="GO" id="GO:0003796">
    <property type="term" value="F:lysozyme activity"/>
    <property type="evidence" value="ECO:0007669"/>
    <property type="project" value="UniProtKB-EC"/>
</dbReference>
<dbReference type="GO" id="GO:0071555">
    <property type="term" value="P:cell wall organization"/>
    <property type="evidence" value="ECO:0007669"/>
    <property type="project" value="UniProtKB-KW"/>
</dbReference>
<dbReference type="GO" id="GO:0042742">
    <property type="term" value="P:defense response to bacterium"/>
    <property type="evidence" value="ECO:0007669"/>
    <property type="project" value="UniProtKB-KW"/>
</dbReference>
<dbReference type="GO" id="GO:0000917">
    <property type="term" value="P:division septum assembly"/>
    <property type="evidence" value="ECO:0007669"/>
    <property type="project" value="UniProtKB-KW"/>
</dbReference>
<dbReference type="GO" id="GO:0031640">
    <property type="term" value="P:killing of cells of another organism"/>
    <property type="evidence" value="ECO:0007669"/>
    <property type="project" value="UniProtKB-KW"/>
</dbReference>
<dbReference type="CDD" id="cd00118">
    <property type="entry name" value="LysM"/>
    <property type="match status" value="3"/>
</dbReference>
<dbReference type="Gene3D" id="1.10.530.10">
    <property type="match status" value="1"/>
</dbReference>
<dbReference type="Gene3D" id="4.10.80.30">
    <property type="entry name" value="DNA polymerase, domain 6"/>
    <property type="match status" value="1"/>
</dbReference>
<dbReference type="Gene3D" id="3.10.350.10">
    <property type="entry name" value="LysM domain"/>
    <property type="match status" value="3"/>
</dbReference>
<dbReference type="InterPro" id="IPR051056">
    <property type="entry name" value="Glycosyl_Hydrolase_73"/>
</dbReference>
<dbReference type="InterPro" id="IPR018392">
    <property type="entry name" value="LysM_dom"/>
</dbReference>
<dbReference type="InterPro" id="IPR036779">
    <property type="entry name" value="LysM_dom_sf"/>
</dbReference>
<dbReference type="InterPro" id="IPR002901">
    <property type="entry name" value="MGlyc_endo_b_GlcNAc-like_dom"/>
</dbReference>
<dbReference type="PANTHER" id="PTHR33308">
    <property type="entry name" value="PEPTIDOGLYCAN HYDROLASE FLGJ"/>
    <property type="match status" value="1"/>
</dbReference>
<dbReference type="PANTHER" id="PTHR33308:SF9">
    <property type="entry name" value="PEPTIDOGLYCAN HYDROLASE FLGJ"/>
    <property type="match status" value="1"/>
</dbReference>
<dbReference type="Pfam" id="PF01832">
    <property type="entry name" value="Glucosaminidase"/>
    <property type="match status" value="1"/>
</dbReference>
<dbReference type="Pfam" id="PF01476">
    <property type="entry name" value="LysM"/>
    <property type="match status" value="3"/>
</dbReference>
<dbReference type="PRINTS" id="PR01002">
    <property type="entry name" value="FLGFLGJ"/>
</dbReference>
<dbReference type="SMART" id="SM00257">
    <property type="entry name" value="LysM"/>
    <property type="match status" value="3"/>
</dbReference>
<dbReference type="SMART" id="SM00047">
    <property type="entry name" value="LYZ2"/>
    <property type="match status" value="1"/>
</dbReference>
<dbReference type="SUPFAM" id="SSF54106">
    <property type="entry name" value="LysM domain"/>
    <property type="match status" value="3"/>
</dbReference>
<dbReference type="PROSITE" id="PS51782">
    <property type="entry name" value="LYSM"/>
    <property type="match status" value="3"/>
</dbReference>
<name>ACMA_LACLA</name>